<feature type="chain" id="PRO_0000365275" description="Photosystem II reaction center protein Psb30">
    <location>
        <begin position="1"/>
        <end position="34"/>
    </location>
</feature>
<feature type="transmembrane region" description="Helical" evidence="1">
    <location>
        <begin position="6"/>
        <end position="26"/>
    </location>
</feature>
<proteinExistence type="inferred from homology"/>
<name>PSB30_HETA4</name>
<evidence type="ECO:0000255" key="1">
    <source>
        <dbReference type="HAMAP-Rule" id="MF_01329"/>
    </source>
</evidence>
<dbReference type="EMBL" id="EU168191">
    <property type="protein sequence ID" value="ABV70139.1"/>
    <property type="molecule type" value="Genomic_DNA"/>
</dbReference>
<dbReference type="RefSeq" id="YP_001936392.1">
    <property type="nucleotide sequence ID" value="NC_010772.1"/>
</dbReference>
<dbReference type="SMR" id="B2XTQ6"/>
<dbReference type="GeneID" id="6335714"/>
<dbReference type="GO" id="GO:0009535">
    <property type="term" value="C:chloroplast thylakoid membrane"/>
    <property type="evidence" value="ECO:0007669"/>
    <property type="project" value="UniProtKB-SubCell"/>
</dbReference>
<dbReference type="GO" id="GO:0009523">
    <property type="term" value="C:photosystem II"/>
    <property type="evidence" value="ECO:0007669"/>
    <property type="project" value="UniProtKB-KW"/>
</dbReference>
<dbReference type="GO" id="GO:0015979">
    <property type="term" value="P:photosynthesis"/>
    <property type="evidence" value="ECO:0007669"/>
    <property type="project" value="UniProtKB-KW"/>
</dbReference>
<dbReference type="HAMAP" id="MF_01329">
    <property type="entry name" value="PSII_Psb30_Ycf12"/>
    <property type="match status" value="1"/>
</dbReference>
<dbReference type="InterPro" id="IPR010284">
    <property type="entry name" value="PSII_Ycf12_core-subunit"/>
</dbReference>
<dbReference type="NCBIfam" id="NF010239">
    <property type="entry name" value="PRK13686.1"/>
    <property type="match status" value="1"/>
</dbReference>
<dbReference type="Pfam" id="PF05969">
    <property type="entry name" value="PSII_Ycf12"/>
    <property type="match status" value="1"/>
</dbReference>
<keyword id="KW-0150">Chloroplast</keyword>
<keyword id="KW-0472">Membrane</keyword>
<keyword id="KW-0602">Photosynthesis</keyword>
<keyword id="KW-0604">Photosystem II</keyword>
<keyword id="KW-0934">Plastid</keyword>
<keyword id="KW-0793">Thylakoid</keyword>
<keyword id="KW-0812">Transmembrane</keyword>
<keyword id="KW-1133">Transmembrane helix</keyword>
<reference key="1">
    <citation type="journal article" date="2008" name="BMC Genomics">
        <title>Chloroplast genome sequencing analysis of Heterosigma akashiwo CCMP452 (West Atlantic) and NIES293 (West Pacific) strains.</title>
        <authorList>
            <person name="Cattolico R.A."/>
            <person name="Jacobs M.A."/>
            <person name="Zhou Y."/>
            <person name="Chang J."/>
            <person name="Duplessis M."/>
            <person name="Lybrand T."/>
            <person name="McKay J."/>
            <person name="Ong H.C."/>
            <person name="Sims E."/>
            <person name="Rocap G."/>
        </authorList>
    </citation>
    <scope>NUCLEOTIDE SEQUENCE [LARGE SCALE GENOMIC DNA]</scope>
</reference>
<sequence>MVNWQVIGQLLSATLIVLAGPAVIFVLAFKKGNL</sequence>
<protein>
    <recommendedName>
        <fullName evidence="1">Photosystem II reaction center protein Psb30</fullName>
    </recommendedName>
    <alternativeName>
        <fullName evidence="1">Photosystem II reaction center protein Ycf12</fullName>
    </alternativeName>
</protein>
<gene>
    <name evidence="1" type="primary">psb30</name>
    <name evidence="1" type="synonym">ycf12</name>
    <name type="ordered locus">Heak452_Cp091</name>
</gene>
<comment type="function">
    <text evidence="1">A core subunit of photosystem II (PSII), probably helps stabilize the reaction center.</text>
</comment>
<comment type="subunit">
    <text evidence="1">PSII is composed of 1 copy each of membrane proteins PsbA, PsbB, PsbC, PsbD, PsbE, PsbF, PsbH, PsbI, PsbJ, PsbK, PsbL, PsbM, PsbT, PsbX, PsbY, PsbZ, Psb30/Ycf12, peripheral proteins of the oxygen-evolving complex and a large number of cofactors. It forms dimeric complexes.</text>
</comment>
<comment type="subcellular location">
    <subcellularLocation>
        <location evidence="1">Plastid</location>
        <location evidence="1">Chloroplast thylakoid membrane</location>
        <topology evidence="1">Single-pass membrane protein</topology>
    </subcellularLocation>
</comment>
<comment type="similarity">
    <text evidence="1">Belongs to the Psb30/Ycf12 family.</text>
</comment>
<accession>B2XTQ6</accession>
<geneLocation type="chloroplast"/>
<organism>
    <name type="scientific">Heterosigma akashiwo (strain CCMP452 / OLISTH)</name>
    <dbReference type="NCBI Taxonomy" id="536046"/>
    <lineage>
        <taxon>Eukaryota</taxon>
        <taxon>Sar</taxon>
        <taxon>Stramenopiles</taxon>
        <taxon>Ochrophyta</taxon>
        <taxon>Raphidophyceae</taxon>
        <taxon>Chattonellales</taxon>
        <taxon>Chattonellaceae</taxon>
        <taxon>Heterosigma</taxon>
    </lineage>
</organism>